<keyword id="KW-0167">Capsid protein</keyword>
<keyword id="KW-1035">Host cytoplasm</keyword>
<keyword id="KW-1142">T=3 icosahedral capsid protein</keyword>
<keyword id="KW-0946">Virion</keyword>
<feature type="chain" id="PRO_0000100118" description="Capsid protein VP1">
    <location>
        <begin position="1"/>
        <end position="539"/>
    </location>
</feature>
<feature type="chain" id="PRO_0000341982" description="Soluble capsid protein">
    <location>
        <begin position="223"/>
        <end position="539"/>
    </location>
</feature>
<feature type="region of interest" description="Shell domain" evidence="1">
    <location>
        <begin position="1"/>
        <end position="221"/>
    </location>
</feature>
<feature type="region of interest" description="Protruding domain" evidence="1">
    <location>
        <begin position="222"/>
        <end position="539"/>
    </location>
</feature>
<feature type="region of interest" description="P1 sub-domain 1" evidence="1">
    <location>
        <begin position="222"/>
        <end position="274"/>
    </location>
</feature>
<feature type="region of interest" description="P2 sub-domain" evidence="1">
    <location>
        <begin position="275"/>
        <end position="417"/>
    </location>
</feature>
<feature type="region of interest" description="P1 sub-domain 2" evidence="1">
    <location>
        <begin position="418"/>
        <end position="539"/>
    </location>
</feature>
<feature type="site" description="Cleavage; by host" evidence="1">
    <location>
        <begin position="223"/>
        <end position="224"/>
    </location>
</feature>
<gene>
    <name type="ORF">ORF2</name>
</gene>
<dbReference type="EMBL" id="X86557">
    <property type="protein sequence ID" value="CAA60255.1"/>
    <property type="molecule type" value="Genomic_RNA"/>
</dbReference>
<dbReference type="SMR" id="P54635"/>
<dbReference type="Proteomes" id="UP000007767">
    <property type="component" value="Genome"/>
</dbReference>
<dbReference type="GO" id="GO:0030430">
    <property type="term" value="C:host cell cytoplasm"/>
    <property type="evidence" value="ECO:0007669"/>
    <property type="project" value="UniProtKB-SubCell"/>
</dbReference>
<dbReference type="GO" id="GO:0039617">
    <property type="term" value="C:T=3 icosahedral viral capsid"/>
    <property type="evidence" value="ECO:0007669"/>
    <property type="project" value="UniProtKB-KW"/>
</dbReference>
<dbReference type="CDD" id="cd00205">
    <property type="entry name" value="rhv_like"/>
    <property type="match status" value="1"/>
</dbReference>
<dbReference type="Gene3D" id="2.60.120.20">
    <property type="match status" value="1"/>
</dbReference>
<dbReference type="Gene3D" id="2.40.30.120">
    <property type="entry name" value="Positive stranded ssRNA viruses"/>
    <property type="match status" value="1"/>
</dbReference>
<dbReference type="Gene3D" id="2.40.510.10">
    <property type="entry name" value="Positive stranded ssRNA viruses"/>
    <property type="match status" value="1"/>
</dbReference>
<dbReference type="InterPro" id="IPR004005">
    <property type="entry name" value="Calicivirus_coat"/>
</dbReference>
<dbReference type="InterPro" id="IPR013643">
    <property type="entry name" value="Calicivirus_coat_C"/>
</dbReference>
<dbReference type="InterPro" id="IPR033703">
    <property type="entry name" value="Rhv-like"/>
</dbReference>
<dbReference type="InterPro" id="IPR029053">
    <property type="entry name" value="Viral_coat"/>
</dbReference>
<dbReference type="Pfam" id="PF00915">
    <property type="entry name" value="Calici_coat"/>
    <property type="match status" value="1"/>
</dbReference>
<dbReference type="Pfam" id="PF08435">
    <property type="entry name" value="Calici_coat_C"/>
    <property type="match status" value="1"/>
</dbReference>
<dbReference type="SUPFAM" id="SSF88633">
    <property type="entry name" value="Positive stranded ssRNA viruses"/>
    <property type="match status" value="1"/>
</dbReference>
<reference key="1">
    <citation type="journal article" date="1995" name="J. Gen. Virol.">
        <title>Human enteric Caliciviridae: the complete genome sequence and expression of virus-like particles from a genetic group II small round structured virus.</title>
        <authorList>
            <person name="Dingle K.E."/>
            <person name="Lambden P.R."/>
            <person name="Caul E.O."/>
            <person name="Clarke I.N."/>
        </authorList>
    </citation>
    <scope>NUCLEOTIDE SEQUENCE [GENOMIC RNA]</scope>
</reference>
<accession>P54635</accession>
<protein>
    <recommendedName>
        <fullName>Capsid protein VP1</fullName>
        <shortName>CP</shortName>
    </recommendedName>
    <alternativeName>
        <fullName>Coat protein</fullName>
    </alternativeName>
    <alternativeName>
        <fullName>VP1</fullName>
    </alternativeName>
    <component>
        <recommendedName>
            <fullName>Soluble capsid protein</fullName>
        </recommendedName>
    </component>
</protein>
<name>CAPSD_LORDV</name>
<evidence type="ECO:0000250" key="1"/>
<evidence type="ECO:0000250" key="2">
    <source>
        <dbReference type="UniProtKB" id="P27406"/>
    </source>
</evidence>
<evidence type="ECO:0000250" key="3">
    <source>
        <dbReference type="UniProtKB" id="Q83884"/>
    </source>
</evidence>
<evidence type="ECO:0000305" key="4"/>
<organismHost>
    <name type="scientific">Homo sapiens</name>
    <name type="common">Human</name>
    <dbReference type="NCBI Taxonomy" id="9606"/>
</organismHost>
<proteinExistence type="inferred from homology"/>
<organism>
    <name type="scientific">Lordsdale virus (strain GII/Human/United Kingdom/Lordsdale/1993)</name>
    <name type="common">Human enteric calicivirus</name>
    <name type="synonym">Hu/NV/LD/1993/UK</name>
    <dbReference type="NCBI Taxonomy" id="82658"/>
    <lineage>
        <taxon>Viruses</taxon>
        <taxon>Riboviria</taxon>
        <taxon>Orthornavirae</taxon>
        <taxon>Pisuviricota</taxon>
        <taxon>Pisoniviricetes</taxon>
        <taxon>Picornavirales</taxon>
        <taxon>Caliciviridae</taxon>
        <taxon>Norovirus</taxon>
        <taxon>Norwalk virus</taxon>
    </lineage>
</organism>
<sequence length="539" mass="58775">MKMASNDANPSDGSAANLVPEVNNEVMALEPVVGAAIAAPVAGQQNVIDPWIRNNFVQAPGGEFTVSPRNAPGEILWSAPLGPDLNPYLSHLSRMYNGYAGGFEVQVILAGNAFTAGKVIFAAVPPNFPTEGLSPSQVTMFPHIIVDVRQLEPVLIPLPDVRNNFYHYNQANDSTLKLIAMLYTPLRANNAGDDVFTVSCRVLTRPSPDFDFIFLVPPTVESRTKPFTVPVLTVEEMSNSRFPIPLEKLYTGPSSAFVVQPQNGRCTTDGVLLGTTQLSAVNICNFRGDVTHIAGSHDYTMNLASQNWSNYDPTEEIPAPLGTPDFVGKIQGLLTQTTRADGSTRAHKATVSTGSVHFTPKLGSVQFTTDTNNDFQAGQNTKFTPVGVIQDGDHHQNEPQQWSLPNYSGRTGHNVHLAPAVAPTFPGEQLLFFRSTMPGCSGYPNMNLDCLLPQEWVLHFYQEAAPAQSDVALLRFVNPDTGRVLFECKLHKSGYITVAHTGPYDLVLPPNGYFRFDSWVNQFYTLAPMGNGTGRRRAL</sequence>
<comment type="function">
    <molecule>Capsid protein VP1</molecule>
    <text evidence="3">Capsid protein self assembles to form an icosahedral capsid with a T=3 symmetry, about 38 nm in diameter, and consisting of 180 capsid proteins. A smaller form of capsid with a diameter of 23 nm might be capsid proteins assembled as icosahedron with T=1 symmetry. The capsid encapsulates the genomic RNA and is decorated with VP2 proteins. Attaches virion to target cells by binding histo-blood group antigens (HBGAs) present on gastroduodenal epithelial cells.</text>
</comment>
<comment type="function">
    <molecule>Soluble capsid protein</molecule>
    <text evidence="3">The soluble capsid protein may play a role in viral immunoevasion.</text>
</comment>
<comment type="subunit">
    <molecule>Capsid protein VP1</molecule>
    <text evidence="2 3">Homodimer. Homomultimer (By similarity). Interacts with the minor capsid protein VP2 (By similarity). Interacts (via C-terminus) with host type I histo-blood group structures antigens at the surface of target cells (By similarity).</text>
</comment>
<comment type="subcellular location">
    <molecule>Capsid protein VP1</molecule>
    <subcellularLocation>
        <location evidence="3">Virion</location>
    </subcellularLocation>
    <subcellularLocation>
        <location evidence="3">Host cytoplasm</location>
    </subcellularLocation>
</comment>
<comment type="domain">
    <molecule>Capsid protein VP1</molecule>
    <text evidence="3">The shell domain (S domain) contains elements essential for the formation of the icosahedron. The Protruding domain (P domain) is divided into sub-domains P1 and P2. P domain interacts in dimeric contacts that increase the stability of the capsid and form the protrusions on the virion. A hypervariable region in P2 is thought to play an important role in receptor binding and immune reactivity.</text>
</comment>
<comment type="PTM">
    <molecule>Capsid protein VP1</molecule>
    <text evidence="3">May be cleaved by host protease to generate soluble capsid protein. Assembled capsid cannot be cleaved.</text>
</comment>
<comment type="similarity">
    <text evidence="4">Belongs to the caliciviridae capsid protein family.</text>
</comment>